<gene>
    <name evidence="1" type="primary">mshC</name>
</gene>
<geneLocation type="plasmid">
    <name>pTP10</name>
</geneLocation>
<accession>Q9FB57</accession>
<keyword id="KW-0067">ATP-binding</keyword>
<keyword id="KW-0436">Ligase</keyword>
<keyword id="KW-0479">Metal-binding</keyword>
<keyword id="KW-0547">Nucleotide-binding</keyword>
<keyword id="KW-0614">Plasmid</keyword>
<keyword id="KW-0862">Zinc</keyword>
<comment type="function">
    <text evidence="1">Catalyzes the ATP-dependent condensation of GlcN-Ins and L-cysteine to form L-Cys-GlcN-Ins.</text>
</comment>
<comment type="catalytic activity">
    <reaction evidence="1">
        <text>1D-myo-inositol 2-amino-2-deoxy-alpha-D-glucopyranoside + L-cysteine + ATP = 1D-myo-inositol 2-(L-cysteinylamino)-2-deoxy-alpha-D-glucopyranoside + AMP + diphosphate + H(+)</text>
        <dbReference type="Rhea" id="RHEA:26176"/>
        <dbReference type="ChEBI" id="CHEBI:15378"/>
        <dbReference type="ChEBI" id="CHEBI:30616"/>
        <dbReference type="ChEBI" id="CHEBI:33019"/>
        <dbReference type="ChEBI" id="CHEBI:35235"/>
        <dbReference type="ChEBI" id="CHEBI:58886"/>
        <dbReference type="ChEBI" id="CHEBI:58887"/>
        <dbReference type="ChEBI" id="CHEBI:456215"/>
        <dbReference type="EC" id="6.3.1.13"/>
    </reaction>
</comment>
<comment type="cofactor">
    <cofactor evidence="1">
        <name>Zn(2+)</name>
        <dbReference type="ChEBI" id="CHEBI:29105"/>
    </cofactor>
    <text evidence="1">Binds 1 zinc ion per subunit.</text>
</comment>
<comment type="subunit">
    <text evidence="1">Monomer.</text>
</comment>
<comment type="similarity">
    <text evidence="1">Belongs to the class-I aminoacyl-tRNA synthetase family. MshC subfamily.</text>
</comment>
<feature type="chain" id="PRO_0000400442" description="L-cysteine:1D-myo-inositol 2-amino-2-deoxy-alpha-D-glucopyranoside ligase">
    <location>
        <begin position="1"/>
        <end position="404"/>
    </location>
</feature>
<feature type="short sequence motif" description="'HIGH' region" evidence="1">
    <location>
        <begin position="49"/>
        <end position="59"/>
    </location>
</feature>
<feature type="short sequence motif" description="'ERGGDP' region" evidence="1">
    <location>
        <begin position="188"/>
        <end position="193"/>
    </location>
</feature>
<feature type="short sequence motif" description="'KMSKS' region" evidence="1">
    <location>
        <begin position="290"/>
        <end position="294"/>
    </location>
</feature>
<feature type="binding site" evidence="1">
    <location>
        <begin position="47"/>
        <end position="50"/>
    </location>
    <ligand>
        <name>L-cysteinyl-5'-AMP</name>
        <dbReference type="ChEBI" id="CHEBI:144924"/>
    </ligand>
</feature>
<feature type="binding site" evidence="1">
    <location>
        <position position="47"/>
    </location>
    <ligand>
        <name>Zn(2+)</name>
        <dbReference type="ChEBI" id="CHEBI:29105"/>
    </ligand>
</feature>
<feature type="binding site" evidence="1">
    <location>
        <position position="62"/>
    </location>
    <ligand>
        <name>L-cysteinyl-5'-AMP</name>
        <dbReference type="ChEBI" id="CHEBI:144924"/>
    </ligand>
</feature>
<feature type="binding site" evidence="1">
    <location>
        <begin position="85"/>
        <end position="87"/>
    </location>
    <ligand>
        <name>L-cysteinyl-5'-AMP</name>
        <dbReference type="ChEBI" id="CHEBI:144924"/>
    </ligand>
</feature>
<feature type="binding site" evidence="1">
    <location>
        <position position="228"/>
    </location>
    <ligand>
        <name>L-cysteinyl-5'-AMP</name>
        <dbReference type="ChEBI" id="CHEBI:144924"/>
    </ligand>
</feature>
<feature type="binding site" evidence="1">
    <location>
        <position position="232"/>
    </location>
    <ligand>
        <name>Zn(2+)</name>
        <dbReference type="ChEBI" id="CHEBI:29105"/>
    </ligand>
</feature>
<feature type="binding site" evidence="1">
    <location>
        <begin position="250"/>
        <end position="252"/>
    </location>
    <ligand>
        <name>L-cysteinyl-5'-AMP</name>
        <dbReference type="ChEBI" id="CHEBI:144924"/>
    </ligand>
</feature>
<feature type="binding site" evidence="1">
    <location>
        <position position="257"/>
    </location>
    <ligand>
        <name>Zn(2+)</name>
        <dbReference type="ChEBI" id="CHEBI:29105"/>
    </ligand>
</feature>
<feature type="binding site" evidence="1">
    <location>
        <position position="284"/>
    </location>
    <ligand>
        <name>L-cysteinyl-5'-AMP</name>
        <dbReference type="ChEBI" id="CHEBI:144924"/>
    </ligand>
</feature>
<evidence type="ECO:0000255" key="1">
    <source>
        <dbReference type="HAMAP-Rule" id="MF_01697"/>
    </source>
</evidence>
<sequence>MHAWPDPSVPAVAGTPVPLKLFDTADQRVKEVDTTPDANGEVGMYVCGITPYDSTHLGHAATYLTFDLAQRQLLANGHKVHYVQNITDVDDPLFERAERDGVDWRELGTSQINLFRSDMEILSVIPPCDYIGAMESVDEVIAMVQQLLDAGAAYELDQGDIYASIDATEQFGYESNLDRATMEEYFAERGGDPDREGKRDPLDALVWRGHREGEPAWDSPFGPGRPGWHVECSAIATNRLGSHFAIQGGGSDLAFPHHEFSAAHAEAALKVERMAGHYVHAGMIALDGVKMSKSLGNLVFVHKLSEAGHDPSAIRLAVFAGHYREDRDFSDAILAEAEERLTRWREQLAGEVSEAEATEVVDKLRAILADDLNTPEALSLLDGAAGDCNQIIATALDGLLGVRI</sequence>
<organism>
    <name type="scientific">Corynebacterium striatum</name>
    <dbReference type="NCBI Taxonomy" id="43770"/>
    <lineage>
        <taxon>Bacteria</taxon>
        <taxon>Bacillati</taxon>
        <taxon>Actinomycetota</taxon>
        <taxon>Actinomycetes</taxon>
        <taxon>Mycobacteriales</taxon>
        <taxon>Corynebacteriaceae</taxon>
        <taxon>Corynebacterium</taxon>
    </lineage>
</organism>
<dbReference type="EC" id="6.3.1.13" evidence="1"/>
<dbReference type="EMBL" id="AF024666">
    <property type="protein sequence ID" value="AAG03366.1"/>
    <property type="molecule type" value="Genomic_DNA"/>
</dbReference>
<dbReference type="RefSeq" id="NP_862232.1">
    <property type="nucleotide sequence ID" value="NC_004939.1"/>
</dbReference>
<dbReference type="RefSeq" id="WP_011116973.1">
    <property type="nucleotide sequence ID" value="NC_004939.1"/>
</dbReference>
<dbReference type="SMR" id="Q9FB57"/>
<dbReference type="GO" id="GO:0005829">
    <property type="term" value="C:cytosol"/>
    <property type="evidence" value="ECO:0007669"/>
    <property type="project" value="TreeGrafter"/>
</dbReference>
<dbReference type="GO" id="GO:0005524">
    <property type="term" value="F:ATP binding"/>
    <property type="evidence" value="ECO:0007669"/>
    <property type="project" value="UniProtKB-KW"/>
</dbReference>
<dbReference type="GO" id="GO:0035446">
    <property type="term" value="F:cysteine-glucosaminylinositol ligase activity"/>
    <property type="evidence" value="ECO:0007669"/>
    <property type="project" value="UniProtKB-UniRule"/>
</dbReference>
<dbReference type="GO" id="GO:0004817">
    <property type="term" value="F:cysteine-tRNA ligase activity"/>
    <property type="evidence" value="ECO:0007669"/>
    <property type="project" value="TreeGrafter"/>
</dbReference>
<dbReference type="GO" id="GO:0008270">
    <property type="term" value="F:zinc ion binding"/>
    <property type="evidence" value="ECO:0007669"/>
    <property type="project" value="UniProtKB-UniRule"/>
</dbReference>
<dbReference type="GO" id="GO:0006423">
    <property type="term" value="P:cysteinyl-tRNA aminoacylation"/>
    <property type="evidence" value="ECO:0007669"/>
    <property type="project" value="TreeGrafter"/>
</dbReference>
<dbReference type="GO" id="GO:0010125">
    <property type="term" value="P:mycothiol biosynthetic process"/>
    <property type="evidence" value="ECO:0007669"/>
    <property type="project" value="UniProtKB-UniRule"/>
</dbReference>
<dbReference type="CDD" id="cd00672">
    <property type="entry name" value="CysRS_core"/>
    <property type="match status" value="1"/>
</dbReference>
<dbReference type="Gene3D" id="1.20.120.640">
    <property type="entry name" value="Anticodon-binding domain of a subclass of class I aminoacyl-tRNA synthetases"/>
    <property type="match status" value="1"/>
</dbReference>
<dbReference type="Gene3D" id="3.40.50.620">
    <property type="entry name" value="HUPs"/>
    <property type="match status" value="1"/>
</dbReference>
<dbReference type="HAMAP" id="MF_01697">
    <property type="entry name" value="MshC"/>
    <property type="match status" value="1"/>
</dbReference>
<dbReference type="InterPro" id="IPR024909">
    <property type="entry name" value="Cys-tRNA/MSH_ligase"/>
</dbReference>
<dbReference type="InterPro" id="IPR017812">
    <property type="entry name" value="Mycothiol_ligase_MshC"/>
</dbReference>
<dbReference type="InterPro" id="IPR014729">
    <property type="entry name" value="Rossmann-like_a/b/a_fold"/>
</dbReference>
<dbReference type="InterPro" id="IPR032678">
    <property type="entry name" value="tRNA-synt_1_cat_dom"/>
</dbReference>
<dbReference type="InterPro" id="IPR009080">
    <property type="entry name" value="tRNAsynth_Ia_anticodon-bd"/>
</dbReference>
<dbReference type="NCBIfam" id="TIGR03447">
    <property type="entry name" value="mycothiol_MshC"/>
    <property type="match status" value="1"/>
</dbReference>
<dbReference type="PANTHER" id="PTHR10890:SF3">
    <property type="entry name" value="CYSTEINE--TRNA LIGASE, CYTOPLASMIC"/>
    <property type="match status" value="1"/>
</dbReference>
<dbReference type="PANTHER" id="PTHR10890">
    <property type="entry name" value="CYSTEINYL-TRNA SYNTHETASE"/>
    <property type="match status" value="1"/>
</dbReference>
<dbReference type="Pfam" id="PF01406">
    <property type="entry name" value="tRNA-synt_1e"/>
    <property type="match status" value="1"/>
</dbReference>
<dbReference type="PRINTS" id="PR00983">
    <property type="entry name" value="TRNASYNTHCYS"/>
</dbReference>
<dbReference type="SUPFAM" id="SSF47323">
    <property type="entry name" value="Anticodon-binding domain of a subclass of class I aminoacyl-tRNA synthetases"/>
    <property type="match status" value="1"/>
</dbReference>
<dbReference type="SUPFAM" id="SSF52374">
    <property type="entry name" value="Nucleotidylyl transferase"/>
    <property type="match status" value="1"/>
</dbReference>
<proteinExistence type="inferred from homology"/>
<reference key="1">
    <citation type="journal article" date="2000" name="Mol. Gen. Genet.">
        <title>The 51,409-bp R-plasmid pTP10 from the multiresistant clinical isolate Corynebacterium striatum M82B is composed of DNA segments initially identified in soil bacteria and in plant, animal, and human pathogens.</title>
        <authorList>
            <person name="Tauch A."/>
            <person name="Krieft S."/>
            <person name="Kalinowski J."/>
            <person name="Puehler A."/>
        </authorList>
    </citation>
    <scope>NUCLEOTIDE SEQUENCE [GENOMIC DNA]</scope>
    <source>
        <strain>M82B</strain>
    </source>
</reference>
<name>MSHC_CORST</name>
<protein>
    <recommendedName>
        <fullName evidence="1">L-cysteine:1D-myo-inositol 2-amino-2-deoxy-alpha-D-glucopyranoside ligase</fullName>
        <shortName evidence="1">L-Cys:GlcN-Ins ligase</shortName>
        <ecNumber evidence="1">6.3.1.13</ecNumber>
    </recommendedName>
    <alternativeName>
        <fullName evidence="1">Mycothiol ligase</fullName>
        <shortName evidence="1">MSH ligase</shortName>
    </alternativeName>
</protein>